<comment type="function">
    <text evidence="1">Binds directly to 16S ribosomal RNA.</text>
</comment>
<comment type="similarity">
    <text evidence="1">Belongs to the bacterial ribosomal protein bS20 family.</text>
</comment>
<dbReference type="EMBL" id="CP000548">
    <property type="protein sequence ID" value="ABO06713.1"/>
    <property type="molecule type" value="Genomic_DNA"/>
</dbReference>
<dbReference type="RefSeq" id="WP_004189743.1">
    <property type="nucleotide sequence ID" value="NZ_CP007802.1"/>
</dbReference>
<dbReference type="SMR" id="A3MHG9"/>
<dbReference type="GeneID" id="93059378"/>
<dbReference type="KEGG" id="bmaz:BM44_2852"/>
<dbReference type="KEGG" id="bmn:BMA10247_0126"/>
<dbReference type="PATRIC" id="fig|320389.8.peg.3220"/>
<dbReference type="GO" id="GO:0005829">
    <property type="term" value="C:cytosol"/>
    <property type="evidence" value="ECO:0007669"/>
    <property type="project" value="TreeGrafter"/>
</dbReference>
<dbReference type="GO" id="GO:0015935">
    <property type="term" value="C:small ribosomal subunit"/>
    <property type="evidence" value="ECO:0007669"/>
    <property type="project" value="TreeGrafter"/>
</dbReference>
<dbReference type="GO" id="GO:0070181">
    <property type="term" value="F:small ribosomal subunit rRNA binding"/>
    <property type="evidence" value="ECO:0007669"/>
    <property type="project" value="TreeGrafter"/>
</dbReference>
<dbReference type="GO" id="GO:0003735">
    <property type="term" value="F:structural constituent of ribosome"/>
    <property type="evidence" value="ECO:0007669"/>
    <property type="project" value="InterPro"/>
</dbReference>
<dbReference type="GO" id="GO:0006412">
    <property type="term" value="P:translation"/>
    <property type="evidence" value="ECO:0007669"/>
    <property type="project" value="UniProtKB-UniRule"/>
</dbReference>
<dbReference type="FunFam" id="1.20.58.110:FF:000001">
    <property type="entry name" value="30S ribosomal protein S20"/>
    <property type="match status" value="1"/>
</dbReference>
<dbReference type="Gene3D" id="1.20.58.110">
    <property type="entry name" value="Ribosomal protein S20"/>
    <property type="match status" value="1"/>
</dbReference>
<dbReference type="HAMAP" id="MF_00500">
    <property type="entry name" value="Ribosomal_bS20"/>
    <property type="match status" value="1"/>
</dbReference>
<dbReference type="InterPro" id="IPR002583">
    <property type="entry name" value="Ribosomal_bS20"/>
</dbReference>
<dbReference type="InterPro" id="IPR036510">
    <property type="entry name" value="Ribosomal_bS20_sf"/>
</dbReference>
<dbReference type="NCBIfam" id="TIGR00029">
    <property type="entry name" value="S20"/>
    <property type="match status" value="1"/>
</dbReference>
<dbReference type="PANTHER" id="PTHR33398">
    <property type="entry name" value="30S RIBOSOMAL PROTEIN S20"/>
    <property type="match status" value="1"/>
</dbReference>
<dbReference type="PANTHER" id="PTHR33398:SF1">
    <property type="entry name" value="SMALL RIBOSOMAL SUBUNIT PROTEIN BS20C"/>
    <property type="match status" value="1"/>
</dbReference>
<dbReference type="Pfam" id="PF01649">
    <property type="entry name" value="Ribosomal_S20p"/>
    <property type="match status" value="1"/>
</dbReference>
<dbReference type="SUPFAM" id="SSF46992">
    <property type="entry name" value="Ribosomal protein S20"/>
    <property type="match status" value="1"/>
</dbReference>
<gene>
    <name evidence="1" type="primary">rpsT</name>
    <name type="ordered locus">BMA10247_0126</name>
</gene>
<protein>
    <recommendedName>
        <fullName evidence="1">Small ribosomal subunit protein bS20</fullName>
    </recommendedName>
    <alternativeName>
        <fullName evidence="3">30S ribosomal protein S20</fullName>
    </alternativeName>
</protein>
<organism>
    <name type="scientific">Burkholderia mallei (strain NCTC 10247)</name>
    <dbReference type="NCBI Taxonomy" id="320389"/>
    <lineage>
        <taxon>Bacteria</taxon>
        <taxon>Pseudomonadati</taxon>
        <taxon>Pseudomonadota</taxon>
        <taxon>Betaproteobacteria</taxon>
        <taxon>Burkholderiales</taxon>
        <taxon>Burkholderiaceae</taxon>
        <taxon>Burkholderia</taxon>
        <taxon>pseudomallei group</taxon>
    </lineage>
</organism>
<sequence>MANSAQARKRARQAAKANSHNSALRSKFRTAIKAVRKAIDAGDQAKAAELFKAATKTIDTIADKKIVHKNKAARHKSRLSAAVKGLQAQAAQ</sequence>
<feature type="chain" id="PRO_1000014557" description="Small ribosomal subunit protein bS20">
    <location>
        <begin position="1"/>
        <end position="92"/>
    </location>
</feature>
<feature type="region of interest" description="Disordered" evidence="2">
    <location>
        <begin position="1"/>
        <end position="25"/>
    </location>
</feature>
<evidence type="ECO:0000255" key="1">
    <source>
        <dbReference type="HAMAP-Rule" id="MF_00500"/>
    </source>
</evidence>
<evidence type="ECO:0000256" key="2">
    <source>
        <dbReference type="SAM" id="MobiDB-lite"/>
    </source>
</evidence>
<evidence type="ECO:0000305" key="3"/>
<keyword id="KW-0687">Ribonucleoprotein</keyword>
<keyword id="KW-0689">Ribosomal protein</keyword>
<keyword id="KW-0694">RNA-binding</keyword>
<keyword id="KW-0699">rRNA-binding</keyword>
<reference key="1">
    <citation type="journal article" date="2010" name="Genome Biol. Evol.">
        <title>Continuing evolution of Burkholderia mallei through genome reduction and large-scale rearrangements.</title>
        <authorList>
            <person name="Losada L."/>
            <person name="Ronning C.M."/>
            <person name="DeShazer D."/>
            <person name="Woods D."/>
            <person name="Fedorova N."/>
            <person name="Kim H.S."/>
            <person name="Shabalina S.A."/>
            <person name="Pearson T.R."/>
            <person name="Brinkac L."/>
            <person name="Tan P."/>
            <person name="Nandi T."/>
            <person name="Crabtree J."/>
            <person name="Badger J."/>
            <person name="Beckstrom-Sternberg S."/>
            <person name="Saqib M."/>
            <person name="Schutzer S.E."/>
            <person name="Keim P."/>
            <person name="Nierman W.C."/>
        </authorList>
    </citation>
    <scope>NUCLEOTIDE SEQUENCE [LARGE SCALE GENOMIC DNA]</scope>
    <source>
        <strain>NCTC 10247</strain>
    </source>
</reference>
<name>RS20_BURM7</name>
<proteinExistence type="inferred from homology"/>
<accession>A3MHG9</accession>